<comment type="function">
    <text evidence="1">NDH-1 shuttles electrons from NADH, via FMN and iron-sulfur (Fe-S) centers, to quinones in the respiratory chain. The immediate electron acceptor for the enzyme in this species is believed to be ubiquinone. Couples the redox reaction to proton translocation (for every two electrons transferred, four hydrogen ions are translocated across the cytoplasmic membrane), and thus conserves the redox energy in a proton gradient.</text>
</comment>
<comment type="catalytic activity">
    <reaction evidence="1">
        <text>a quinone + NADH + 5 H(+)(in) = a quinol + NAD(+) + 4 H(+)(out)</text>
        <dbReference type="Rhea" id="RHEA:57888"/>
        <dbReference type="ChEBI" id="CHEBI:15378"/>
        <dbReference type="ChEBI" id="CHEBI:24646"/>
        <dbReference type="ChEBI" id="CHEBI:57540"/>
        <dbReference type="ChEBI" id="CHEBI:57945"/>
        <dbReference type="ChEBI" id="CHEBI:132124"/>
    </reaction>
</comment>
<comment type="subunit">
    <text evidence="1">NDH-1 is composed of 14 different subunits. Subunits NuoB, C, D, E, F, and G constitute the peripheral sector of the complex.</text>
</comment>
<comment type="subcellular location">
    <subcellularLocation>
        <location evidence="1">Cell inner membrane</location>
        <topology evidence="1">Peripheral membrane protein</topology>
        <orientation evidence="1">Cytoplasmic side</orientation>
    </subcellularLocation>
</comment>
<comment type="similarity">
    <text evidence="1">Belongs to the complex I 49 kDa subunit family.</text>
</comment>
<proteinExistence type="inferred from homology"/>
<accession>A0LEQ1</accession>
<feature type="chain" id="PRO_0000357946" description="NADH-quinone oxidoreductase subunit D">
    <location>
        <begin position="1"/>
        <end position="373"/>
    </location>
</feature>
<dbReference type="EC" id="7.1.1.-" evidence="1"/>
<dbReference type="EMBL" id="CP000478">
    <property type="protein sequence ID" value="ABK15903.1"/>
    <property type="molecule type" value="Genomic_DNA"/>
</dbReference>
<dbReference type="RefSeq" id="WP_011697076.1">
    <property type="nucleotide sequence ID" value="NC_008554.1"/>
</dbReference>
<dbReference type="SMR" id="A0LEQ1"/>
<dbReference type="STRING" id="335543.Sfum_0202"/>
<dbReference type="KEGG" id="sfu:Sfum_0202"/>
<dbReference type="eggNOG" id="COG0649">
    <property type="taxonomic scope" value="Bacteria"/>
</dbReference>
<dbReference type="HOGENOM" id="CLU_015134_1_2_7"/>
<dbReference type="InParanoid" id="A0LEQ1"/>
<dbReference type="OrthoDB" id="9801496at2"/>
<dbReference type="Proteomes" id="UP000001784">
    <property type="component" value="Chromosome"/>
</dbReference>
<dbReference type="GO" id="GO:0005886">
    <property type="term" value="C:plasma membrane"/>
    <property type="evidence" value="ECO:0007669"/>
    <property type="project" value="UniProtKB-SubCell"/>
</dbReference>
<dbReference type="GO" id="GO:0051287">
    <property type="term" value="F:NAD binding"/>
    <property type="evidence" value="ECO:0007669"/>
    <property type="project" value="InterPro"/>
</dbReference>
<dbReference type="GO" id="GO:0050136">
    <property type="term" value="F:NADH:ubiquinone reductase (non-electrogenic) activity"/>
    <property type="evidence" value="ECO:0007669"/>
    <property type="project" value="UniProtKB-UniRule"/>
</dbReference>
<dbReference type="GO" id="GO:0048038">
    <property type="term" value="F:quinone binding"/>
    <property type="evidence" value="ECO:0007669"/>
    <property type="project" value="UniProtKB-KW"/>
</dbReference>
<dbReference type="Gene3D" id="1.10.645.10">
    <property type="entry name" value="Cytochrome-c3 Hydrogenase, chain B"/>
    <property type="match status" value="1"/>
</dbReference>
<dbReference type="HAMAP" id="MF_01358">
    <property type="entry name" value="NDH1_NuoD"/>
    <property type="match status" value="1"/>
</dbReference>
<dbReference type="InterPro" id="IPR001135">
    <property type="entry name" value="NADH_Q_OxRdtase_suD"/>
</dbReference>
<dbReference type="InterPro" id="IPR022885">
    <property type="entry name" value="NDH1_su_D/H"/>
</dbReference>
<dbReference type="InterPro" id="IPR029014">
    <property type="entry name" value="NiFe-Hase_large"/>
</dbReference>
<dbReference type="NCBIfam" id="NF004739">
    <property type="entry name" value="PRK06075.1"/>
    <property type="match status" value="1"/>
</dbReference>
<dbReference type="PANTHER" id="PTHR11993:SF10">
    <property type="entry name" value="NADH DEHYDROGENASE [UBIQUINONE] IRON-SULFUR PROTEIN 2, MITOCHONDRIAL"/>
    <property type="match status" value="1"/>
</dbReference>
<dbReference type="PANTHER" id="PTHR11993">
    <property type="entry name" value="NADH-UBIQUINONE OXIDOREDUCTASE 49 KDA SUBUNIT"/>
    <property type="match status" value="1"/>
</dbReference>
<dbReference type="Pfam" id="PF00346">
    <property type="entry name" value="Complex1_49kDa"/>
    <property type="match status" value="2"/>
</dbReference>
<dbReference type="SUPFAM" id="SSF56762">
    <property type="entry name" value="HydB/Nqo4-like"/>
    <property type="match status" value="1"/>
</dbReference>
<keyword id="KW-0997">Cell inner membrane</keyword>
<keyword id="KW-1003">Cell membrane</keyword>
<keyword id="KW-0472">Membrane</keyword>
<keyword id="KW-0520">NAD</keyword>
<keyword id="KW-0874">Quinone</keyword>
<keyword id="KW-1185">Reference proteome</keyword>
<keyword id="KW-1278">Translocase</keyword>
<keyword id="KW-0813">Transport</keyword>
<keyword id="KW-0830">Ubiquinone</keyword>
<gene>
    <name evidence="1" type="primary">nuoD</name>
    <name type="ordered locus">Sfum_0202</name>
</gene>
<sequence>MPKRFLAPVTEQIYTLNLGPQHPSTHGVLRVLLDLDGEFIVKADPVIGYGHRGHEKMGENRLFKQFLPNTSRLDYLSGFLFNHGYVLAVEKLAGIPVPPRAQFIRTICSEFNRIASHLLWFGTYVMDLGGFTPFLYAFDDRERILDILDWVTGSRLTYSYCRFGGVDRDIDTRFTDMARDFIKRLRSRWPDYHNLVTRNIIFIHRTRGVGVITPEQARQFGVTGPNLRACGIAFDTRKAEPYEVYDQFDFEIPVGSDGDALDRYRVRFEEMEQSLRIIEQALDRLPGGPFMNDSVPTRLKPPKGEVYFAFESARGQAAYYLVSDGTPSPYRCHIRVPSFGNLHVLTEVLRGTLVADAISILGSVDLVIPEIDR</sequence>
<evidence type="ECO:0000255" key="1">
    <source>
        <dbReference type="HAMAP-Rule" id="MF_01358"/>
    </source>
</evidence>
<organism>
    <name type="scientific">Syntrophobacter fumaroxidans (strain DSM 10017 / MPOB)</name>
    <dbReference type="NCBI Taxonomy" id="335543"/>
    <lineage>
        <taxon>Bacteria</taxon>
        <taxon>Pseudomonadati</taxon>
        <taxon>Thermodesulfobacteriota</taxon>
        <taxon>Syntrophobacteria</taxon>
        <taxon>Syntrophobacterales</taxon>
        <taxon>Syntrophobacteraceae</taxon>
        <taxon>Syntrophobacter</taxon>
    </lineage>
</organism>
<reference key="1">
    <citation type="submission" date="2006-10" db="EMBL/GenBank/DDBJ databases">
        <title>Complete sequence of Syntrophobacter fumaroxidans MPOB.</title>
        <authorList>
            <consortium name="US DOE Joint Genome Institute"/>
            <person name="Copeland A."/>
            <person name="Lucas S."/>
            <person name="Lapidus A."/>
            <person name="Barry K."/>
            <person name="Detter J.C."/>
            <person name="Glavina del Rio T."/>
            <person name="Hammon N."/>
            <person name="Israni S."/>
            <person name="Pitluck S."/>
            <person name="Goltsman E.G."/>
            <person name="Martinez M."/>
            <person name="Schmutz J."/>
            <person name="Larimer F."/>
            <person name="Land M."/>
            <person name="Hauser L."/>
            <person name="Kyrpides N."/>
            <person name="Kim E."/>
            <person name="Boone D.R."/>
            <person name="Brockman F."/>
            <person name="Culley D."/>
            <person name="Ferry J."/>
            <person name="Gunsalus R."/>
            <person name="McInerney M.J."/>
            <person name="Morrison M."/>
            <person name="Plugge C."/>
            <person name="Rohlin L."/>
            <person name="Scholten J."/>
            <person name="Sieber J."/>
            <person name="Stams A.J.M."/>
            <person name="Worm P."/>
            <person name="Henstra A.M."/>
            <person name="Richardson P."/>
        </authorList>
    </citation>
    <scope>NUCLEOTIDE SEQUENCE [LARGE SCALE GENOMIC DNA]</scope>
    <source>
        <strain>DSM 10017 / MPOB</strain>
    </source>
</reference>
<protein>
    <recommendedName>
        <fullName evidence="1">NADH-quinone oxidoreductase subunit D</fullName>
        <ecNumber evidence="1">7.1.1.-</ecNumber>
    </recommendedName>
    <alternativeName>
        <fullName evidence="1">NADH dehydrogenase I subunit D</fullName>
    </alternativeName>
    <alternativeName>
        <fullName evidence="1">NDH-1 subunit D</fullName>
    </alternativeName>
</protein>
<name>NUOD_SYNFM</name>